<dbReference type="EC" id="1.15.1.1" evidence="2"/>
<dbReference type="EMBL" id="BA000033">
    <property type="protein sequence ID" value="BAB95370.1"/>
    <property type="molecule type" value="Genomic_DNA"/>
</dbReference>
<dbReference type="RefSeq" id="WP_000863556.1">
    <property type="nucleotide sequence ID" value="NC_003923.1"/>
</dbReference>
<dbReference type="SMR" id="P0A0J2"/>
<dbReference type="KEGG" id="sam:MW1505"/>
<dbReference type="HOGENOM" id="CLU_031625_0_1_9"/>
<dbReference type="GO" id="GO:0005737">
    <property type="term" value="C:cytoplasm"/>
    <property type="evidence" value="ECO:0007669"/>
    <property type="project" value="TreeGrafter"/>
</dbReference>
<dbReference type="GO" id="GO:0046872">
    <property type="term" value="F:metal ion binding"/>
    <property type="evidence" value="ECO:0007669"/>
    <property type="project" value="UniProtKB-KW"/>
</dbReference>
<dbReference type="GO" id="GO:0004784">
    <property type="term" value="F:superoxide dismutase activity"/>
    <property type="evidence" value="ECO:0007669"/>
    <property type="project" value="UniProtKB-EC"/>
</dbReference>
<dbReference type="FunFam" id="1.10.287.990:FF:000001">
    <property type="entry name" value="Superoxide dismutase"/>
    <property type="match status" value="1"/>
</dbReference>
<dbReference type="FunFam" id="3.55.40.20:FF:000001">
    <property type="entry name" value="Superoxide dismutase"/>
    <property type="match status" value="1"/>
</dbReference>
<dbReference type="Gene3D" id="1.10.287.990">
    <property type="entry name" value="Fe,Mn superoxide dismutase (SOD) domain"/>
    <property type="match status" value="1"/>
</dbReference>
<dbReference type="Gene3D" id="3.55.40.20">
    <property type="entry name" value="Iron/manganese superoxide dismutase, C-terminal domain"/>
    <property type="match status" value="1"/>
</dbReference>
<dbReference type="InterPro" id="IPR001189">
    <property type="entry name" value="Mn/Fe_SOD"/>
</dbReference>
<dbReference type="InterPro" id="IPR019833">
    <property type="entry name" value="Mn/Fe_SOD_BS"/>
</dbReference>
<dbReference type="InterPro" id="IPR019832">
    <property type="entry name" value="Mn/Fe_SOD_C"/>
</dbReference>
<dbReference type="InterPro" id="IPR019831">
    <property type="entry name" value="Mn/Fe_SOD_N"/>
</dbReference>
<dbReference type="InterPro" id="IPR036324">
    <property type="entry name" value="Mn/Fe_SOD_N_sf"/>
</dbReference>
<dbReference type="InterPro" id="IPR036314">
    <property type="entry name" value="SOD_C_sf"/>
</dbReference>
<dbReference type="PANTHER" id="PTHR43595">
    <property type="entry name" value="37S RIBOSOMAL PROTEIN S26, MITOCHONDRIAL"/>
    <property type="match status" value="1"/>
</dbReference>
<dbReference type="PANTHER" id="PTHR43595:SF2">
    <property type="entry name" value="SMALL RIBOSOMAL SUBUNIT PROTEIN MS42"/>
    <property type="match status" value="1"/>
</dbReference>
<dbReference type="Pfam" id="PF02777">
    <property type="entry name" value="Sod_Fe_C"/>
    <property type="match status" value="1"/>
</dbReference>
<dbReference type="Pfam" id="PF00081">
    <property type="entry name" value="Sod_Fe_N"/>
    <property type="match status" value="1"/>
</dbReference>
<dbReference type="PIRSF" id="PIRSF000349">
    <property type="entry name" value="SODismutase"/>
    <property type="match status" value="1"/>
</dbReference>
<dbReference type="PRINTS" id="PR01703">
    <property type="entry name" value="MNSODISMTASE"/>
</dbReference>
<dbReference type="SUPFAM" id="SSF54719">
    <property type="entry name" value="Fe,Mn superoxide dismutase (SOD), C-terminal domain"/>
    <property type="match status" value="1"/>
</dbReference>
<dbReference type="SUPFAM" id="SSF46609">
    <property type="entry name" value="Fe,Mn superoxide dismutase (SOD), N-terminal domain"/>
    <property type="match status" value="1"/>
</dbReference>
<dbReference type="PROSITE" id="PS00088">
    <property type="entry name" value="SOD_MN"/>
    <property type="match status" value="1"/>
</dbReference>
<reference key="1">
    <citation type="journal article" date="2002" name="Lancet">
        <title>Genome and virulence determinants of high virulence community-acquired MRSA.</title>
        <authorList>
            <person name="Baba T."/>
            <person name="Takeuchi F."/>
            <person name="Kuroda M."/>
            <person name="Yuzawa H."/>
            <person name="Aoki K."/>
            <person name="Oguchi A."/>
            <person name="Nagai Y."/>
            <person name="Iwama N."/>
            <person name="Asano K."/>
            <person name="Naimi T."/>
            <person name="Kuroda H."/>
            <person name="Cui L."/>
            <person name="Yamamoto K."/>
            <person name="Hiramatsu K."/>
        </authorList>
    </citation>
    <scope>NUCLEOTIDE SEQUENCE [LARGE SCALE GENOMIC DNA]</scope>
    <source>
        <strain>MW2</strain>
    </source>
</reference>
<keyword id="KW-0408">Iron</keyword>
<keyword id="KW-0464">Manganese</keyword>
<keyword id="KW-0479">Metal-binding</keyword>
<keyword id="KW-0560">Oxidoreductase</keyword>
<keyword id="KW-0346">Stress response</keyword>
<comment type="function">
    <text evidence="2">Destroys superoxide anion radicals which are normally produced within the cells and which are toxic to biological systems. Catalyzes the dismutation of superoxide anion radicals into O2 and H2O2 by successive reduction and oxidation of the transition metal ion at the active site.</text>
</comment>
<comment type="catalytic activity">
    <reaction evidence="2">
        <text>2 superoxide + 2 H(+) = H2O2 + O2</text>
        <dbReference type="Rhea" id="RHEA:20696"/>
        <dbReference type="ChEBI" id="CHEBI:15378"/>
        <dbReference type="ChEBI" id="CHEBI:15379"/>
        <dbReference type="ChEBI" id="CHEBI:16240"/>
        <dbReference type="ChEBI" id="CHEBI:18421"/>
        <dbReference type="EC" id="1.15.1.1"/>
    </reaction>
    <physiologicalReaction direction="left-to-right" evidence="2">
        <dbReference type="Rhea" id="RHEA:20697"/>
    </physiologicalReaction>
</comment>
<comment type="cofactor">
    <cofactor evidence="2">
        <name>Mn(2+)</name>
        <dbReference type="ChEBI" id="CHEBI:29035"/>
    </cofactor>
    <cofactor evidence="2">
        <name>Fe(3+)</name>
        <dbReference type="ChEBI" id="CHEBI:29034"/>
    </cofactor>
    <text evidence="2">Binds 1 Mn(2+) or Fe(3+) ion per subunit.</text>
</comment>
<comment type="subunit">
    <text evidence="1">Homodimer. Can also form a heterodimer with SodM (By similarity).</text>
</comment>
<comment type="similarity">
    <text evidence="3">Belongs to the iron/manganese superoxide dismutase family.</text>
</comment>
<accession>P0A0J2</accession>
<accession>Q9Z5W5</accession>
<feature type="chain" id="PRO_0000160074" description="Superoxide dismutase [Mn/Fe] 1">
    <location>
        <begin position="1"/>
        <end position="199"/>
    </location>
</feature>
<feature type="binding site" evidence="2">
    <location>
        <position position="27"/>
    </location>
    <ligand>
        <name>Fe(3+)</name>
        <dbReference type="ChEBI" id="CHEBI:29034"/>
    </ligand>
</feature>
<feature type="binding site" evidence="2">
    <location>
        <position position="27"/>
    </location>
    <ligand>
        <name>Mn(2+)</name>
        <dbReference type="ChEBI" id="CHEBI:29035"/>
    </ligand>
</feature>
<feature type="binding site" evidence="2">
    <location>
        <position position="81"/>
    </location>
    <ligand>
        <name>Fe(3+)</name>
        <dbReference type="ChEBI" id="CHEBI:29034"/>
    </ligand>
</feature>
<feature type="binding site" evidence="2">
    <location>
        <position position="81"/>
    </location>
    <ligand>
        <name>Mn(2+)</name>
        <dbReference type="ChEBI" id="CHEBI:29035"/>
    </ligand>
</feature>
<feature type="binding site" evidence="2">
    <location>
        <position position="161"/>
    </location>
    <ligand>
        <name>Fe(3+)</name>
        <dbReference type="ChEBI" id="CHEBI:29034"/>
    </ligand>
</feature>
<feature type="binding site" evidence="2">
    <location>
        <position position="161"/>
    </location>
    <ligand>
        <name>Mn(2+)</name>
        <dbReference type="ChEBI" id="CHEBI:29035"/>
    </ligand>
</feature>
<feature type="binding site" evidence="2">
    <location>
        <position position="165"/>
    </location>
    <ligand>
        <name>Fe(3+)</name>
        <dbReference type="ChEBI" id="CHEBI:29034"/>
    </ligand>
</feature>
<feature type="binding site" evidence="2">
    <location>
        <position position="165"/>
    </location>
    <ligand>
        <name>Mn(2+)</name>
        <dbReference type="ChEBI" id="CHEBI:29035"/>
    </ligand>
</feature>
<name>SODM1_STAAW</name>
<evidence type="ECO:0000250" key="1"/>
<evidence type="ECO:0000250" key="2">
    <source>
        <dbReference type="UniProtKB" id="P80293"/>
    </source>
</evidence>
<evidence type="ECO:0000305" key="3"/>
<organism>
    <name type="scientific">Staphylococcus aureus (strain MW2)</name>
    <dbReference type="NCBI Taxonomy" id="196620"/>
    <lineage>
        <taxon>Bacteria</taxon>
        <taxon>Bacillati</taxon>
        <taxon>Bacillota</taxon>
        <taxon>Bacilli</taxon>
        <taxon>Bacillales</taxon>
        <taxon>Staphylococcaceae</taxon>
        <taxon>Staphylococcus</taxon>
    </lineage>
</organism>
<gene>
    <name type="primary">sodA</name>
    <name type="ordered locus">MW1505</name>
</gene>
<proteinExistence type="inferred from homology"/>
<protein>
    <recommendedName>
        <fullName>Superoxide dismutase [Mn/Fe] 1</fullName>
        <ecNumber evidence="2">1.15.1.1</ecNumber>
    </recommendedName>
</protein>
<sequence>MAFELPKLPYAFDALEPHFDKETMEIHHDRHHNTYVTKLNAAVEGTDLESKSIEEIVANLDSVPANIQTAVRNNGGGHLNHSLFWELLSPNSEEKGTVVEKIKEQWGSLEEFKKEFADKAAARFGSGWAWLVVNNGQLEIVTTPNQDNPLTEGKTPILGLDVWEHAYYLKYQNKRPDYIGAFWNVVNWEKVDELYNATK</sequence>